<accession>A0L5W2</accession>
<reference key="1">
    <citation type="journal article" date="2009" name="Appl. Environ. Microbiol.">
        <title>Complete genome sequence of the chemolithoautotrophic marine magnetotactic coccus strain MC-1.</title>
        <authorList>
            <person name="Schubbe S."/>
            <person name="Williams T.J."/>
            <person name="Xie G."/>
            <person name="Kiss H.E."/>
            <person name="Brettin T.S."/>
            <person name="Martinez D."/>
            <person name="Ross C.A."/>
            <person name="Schuler D."/>
            <person name="Cox B.L."/>
            <person name="Nealson K.H."/>
            <person name="Bazylinski D.A."/>
        </authorList>
    </citation>
    <scope>NUCLEOTIDE SEQUENCE [LARGE SCALE GENOMIC DNA]</scope>
    <source>
        <strain>ATCC BAA-1437 / JCM 17883 / MC-1</strain>
    </source>
</reference>
<evidence type="ECO:0000255" key="1">
    <source>
        <dbReference type="HAMAP-Rule" id="MF_00736"/>
    </source>
</evidence>
<evidence type="ECO:0000305" key="2"/>
<comment type="function">
    <text evidence="1">Forms part of the ribosomal stalk which helps the ribosome interact with GTP-bound translation factors.</text>
</comment>
<comment type="subunit">
    <text evidence="1">Part of the ribosomal stalk of the 50S ribosomal subunit. Interacts with L10 and the large rRNA to form the base of the stalk. L10 forms an elongated spine to which L12 dimers bind in a sequential fashion forming a multimeric L10(L12)X complex.</text>
</comment>
<comment type="PTM">
    <text evidence="1">One or more lysine residues are methylated.</text>
</comment>
<comment type="similarity">
    <text evidence="1">Belongs to the universal ribosomal protein uL11 family.</text>
</comment>
<organism>
    <name type="scientific">Magnetococcus marinus (strain ATCC BAA-1437 / JCM 17883 / MC-1)</name>
    <dbReference type="NCBI Taxonomy" id="156889"/>
    <lineage>
        <taxon>Bacteria</taxon>
        <taxon>Pseudomonadati</taxon>
        <taxon>Pseudomonadota</taxon>
        <taxon>Alphaproteobacteria</taxon>
        <taxon>Magnetococcales</taxon>
        <taxon>Magnetococcaceae</taxon>
        <taxon>Magnetococcus</taxon>
    </lineage>
</organism>
<name>RL11_MAGMM</name>
<proteinExistence type="inferred from homology"/>
<protein>
    <recommendedName>
        <fullName evidence="1">Large ribosomal subunit protein uL11</fullName>
    </recommendedName>
    <alternativeName>
        <fullName evidence="2">50S ribosomal protein L11</fullName>
    </alternativeName>
</protein>
<dbReference type="EMBL" id="CP000471">
    <property type="protein sequence ID" value="ABK43355.1"/>
    <property type="molecule type" value="Genomic_DNA"/>
</dbReference>
<dbReference type="RefSeq" id="WP_011712515.1">
    <property type="nucleotide sequence ID" value="NC_008576.1"/>
</dbReference>
<dbReference type="SMR" id="A0L5W2"/>
<dbReference type="STRING" id="156889.Mmc1_0836"/>
<dbReference type="KEGG" id="mgm:Mmc1_0836"/>
<dbReference type="eggNOG" id="COG0080">
    <property type="taxonomic scope" value="Bacteria"/>
</dbReference>
<dbReference type="HOGENOM" id="CLU_074237_2_0_5"/>
<dbReference type="OrthoDB" id="9802408at2"/>
<dbReference type="Proteomes" id="UP000002586">
    <property type="component" value="Chromosome"/>
</dbReference>
<dbReference type="GO" id="GO:0022625">
    <property type="term" value="C:cytosolic large ribosomal subunit"/>
    <property type="evidence" value="ECO:0007669"/>
    <property type="project" value="TreeGrafter"/>
</dbReference>
<dbReference type="GO" id="GO:0070180">
    <property type="term" value="F:large ribosomal subunit rRNA binding"/>
    <property type="evidence" value="ECO:0007669"/>
    <property type="project" value="UniProtKB-UniRule"/>
</dbReference>
<dbReference type="GO" id="GO:0003735">
    <property type="term" value="F:structural constituent of ribosome"/>
    <property type="evidence" value="ECO:0007669"/>
    <property type="project" value="InterPro"/>
</dbReference>
<dbReference type="GO" id="GO:0006412">
    <property type="term" value="P:translation"/>
    <property type="evidence" value="ECO:0007669"/>
    <property type="project" value="UniProtKB-UniRule"/>
</dbReference>
<dbReference type="CDD" id="cd00349">
    <property type="entry name" value="Ribosomal_L11"/>
    <property type="match status" value="1"/>
</dbReference>
<dbReference type="FunFam" id="1.10.10.250:FF:000001">
    <property type="entry name" value="50S ribosomal protein L11"/>
    <property type="match status" value="1"/>
</dbReference>
<dbReference type="FunFam" id="3.30.1550.10:FF:000005">
    <property type="entry name" value="50S ribosomal protein L11"/>
    <property type="match status" value="1"/>
</dbReference>
<dbReference type="Gene3D" id="1.10.10.250">
    <property type="entry name" value="Ribosomal protein L11, C-terminal domain"/>
    <property type="match status" value="1"/>
</dbReference>
<dbReference type="Gene3D" id="3.30.1550.10">
    <property type="entry name" value="Ribosomal protein L11/L12, N-terminal domain"/>
    <property type="match status" value="1"/>
</dbReference>
<dbReference type="HAMAP" id="MF_00736">
    <property type="entry name" value="Ribosomal_uL11"/>
    <property type="match status" value="1"/>
</dbReference>
<dbReference type="InterPro" id="IPR000911">
    <property type="entry name" value="Ribosomal_uL11"/>
</dbReference>
<dbReference type="InterPro" id="IPR006519">
    <property type="entry name" value="Ribosomal_uL11_bac-typ"/>
</dbReference>
<dbReference type="InterPro" id="IPR020783">
    <property type="entry name" value="Ribosomal_uL11_C"/>
</dbReference>
<dbReference type="InterPro" id="IPR036769">
    <property type="entry name" value="Ribosomal_uL11_C_sf"/>
</dbReference>
<dbReference type="InterPro" id="IPR020784">
    <property type="entry name" value="Ribosomal_uL11_N"/>
</dbReference>
<dbReference type="InterPro" id="IPR036796">
    <property type="entry name" value="Ribosomal_uL11_N_sf"/>
</dbReference>
<dbReference type="NCBIfam" id="TIGR01632">
    <property type="entry name" value="L11_bact"/>
    <property type="match status" value="1"/>
</dbReference>
<dbReference type="PANTHER" id="PTHR11661">
    <property type="entry name" value="60S RIBOSOMAL PROTEIN L12"/>
    <property type="match status" value="1"/>
</dbReference>
<dbReference type="PANTHER" id="PTHR11661:SF1">
    <property type="entry name" value="LARGE RIBOSOMAL SUBUNIT PROTEIN UL11M"/>
    <property type="match status" value="1"/>
</dbReference>
<dbReference type="Pfam" id="PF00298">
    <property type="entry name" value="Ribosomal_L11"/>
    <property type="match status" value="1"/>
</dbReference>
<dbReference type="Pfam" id="PF03946">
    <property type="entry name" value="Ribosomal_L11_N"/>
    <property type="match status" value="1"/>
</dbReference>
<dbReference type="SMART" id="SM00649">
    <property type="entry name" value="RL11"/>
    <property type="match status" value="1"/>
</dbReference>
<dbReference type="SUPFAM" id="SSF54747">
    <property type="entry name" value="Ribosomal L11/L12e N-terminal domain"/>
    <property type="match status" value="1"/>
</dbReference>
<dbReference type="SUPFAM" id="SSF46906">
    <property type="entry name" value="Ribosomal protein L11, C-terminal domain"/>
    <property type="match status" value="1"/>
</dbReference>
<gene>
    <name evidence="1" type="primary">rplK</name>
    <name type="ordered locus">Mmc1_0836</name>
</gene>
<keyword id="KW-0488">Methylation</keyword>
<keyword id="KW-1185">Reference proteome</keyword>
<keyword id="KW-0687">Ribonucleoprotein</keyword>
<keyword id="KW-0689">Ribosomal protein</keyword>
<keyword id="KW-0694">RNA-binding</keyword>
<keyword id="KW-0699">rRNA-binding</keyword>
<feature type="chain" id="PRO_1000046206" description="Large ribosomal subunit protein uL11">
    <location>
        <begin position="1"/>
        <end position="142"/>
    </location>
</feature>
<sequence>MAKKITAYIKLQCPAGAAKPSPPVGPALGQHGLNIMEFCKAFNAQTANMEPASPVPVLISVYADRTFSFELKTPPASYFLKKAAGLQGGSKAPNRDPAVGKVTWAQVEEIAKAKMVDLNANDIEAAKKIIAGSANSMGLEVV</sequence>